<dbReference type="EMBL" id="Y18277">
    <property type="protein sequence ID" value="CAC18801.1"/>
    <property type="molecule type" value="mRNA"/>
</dbReference>
<dbReference type="FunCoup" id="Q9DDD5">
    <property type="interactions" value="464"/>
</dbReference>
<dbReference type="STRING" id="9031.ENSGALP00000073122"/>
<dbReference type="GlyGen" id="Q9DDD5">
    <property type="glycosylation" value="1 site"/>
</dbReference>
<dbReference type="PaxDb" id="9031-ENSGALP00000027504"/>
<dbReference type="VEuPathDB" id="HostDB:geneid_395195"/>
<dbReference type="eggNOG" id="KOG1787">
    <property type="taxonomic scope" value="Eukaryota"/>
</dbReference>
<dbReference type="InParanoid" id="Q9DDD5"/>
<dbReference type="OrthoDB" id="26681at2759"/>
<dbReference type="PhylomeDB" id="Q9DDD5"/>
<dbReference type="Proteomes" id="UP000000539">
    <property type="component" value="Unassembled WGS sequence"/>
</dbReference>
<dbReference type="GO" id="GO:0005737">
    <property type="term" value="C:cytoplasm"/>
    <property type="evidence" value="ECO:0007669"/>
    <property type="project" value="UniProtKB-SubCell"/>
</dbReference>
<dbReference type="GO" id="GO:0016020">
    <property type="term" value="C:membrane"/>
    <property type="evidence" value="ECO:0007669"/>
    <property type="project" value="UniProtKB-SubCell"/>
</dbReference>
<dbReference type="InterPro" id="IPR031570">
    <property type="entry name" value="NBEA/BDCP_DUF4704"/>
</dbReference>
<dbReference type="Pfam" id="PF15787">
    <property type="entry name" value="DUF4704"/>
    <property type="match status" value="1"/>
</dbReference>
<name>NBEA_CHICK</name>
<evidence type="ECO:0000250" key="1"/>
<evidence type="ECO:0000250" key="2">
    <source>
        <dbReference type="UniProtKB" id="Q9EPN1"/>
    </source>
</evidence>
<evidence type="ECO:0000256" key="3">
    <source>
        <dbReference type="SAM" id="MobiDB-lite"/>
    </source>
</evidence>
<evidence type="ECO:0000269" key="4">
    <source>
    </source>
</evidence>
<evidence type="ECO:0000305" key="5"/>
<evidence type="ECO:0000312" key="6">
    <source>
        <dbReference type="EMBL" id="CAC18801.1"/>
    </source>
</evidence>
<sequence>PKNSEEQKITEMVYNIFRILLYHAIKYEWGGWRVWVDTLSIAHSKVTYEAHKEYLAKMYEEYQRQEEENIKKGKKGNVSTISGLSSQTTGAKGGMEIREIEDLSQSQSPESETDYPVSTDTRDLLMATKVSDDVLGSAERPGGGVHVEVHDLLVDIKAERVEATEVKLDDMDLSPETLVTGENGALVEVESLLDNVYSAAVEKLQNSVHGSVGIIKKNEEKDGGPLITLADEKDEPSTNSTSFLFDKIPSQEEKLLPDLSISHISIPNVQDTQMHLGVNDDLGLLAHMTGGVDITSTSSIIEDKEFKIHTNSVGMSSIFERELASLFKGLEYAEMTATTPETEFFCSKTVPNVDAGSIISVTERFVDGKEAGKEIRKIQTTTTTQAVQGRSVTQQDRDLRVDLGFRGMPMTEEQRRQFSPGPRTNMFRIPEFKWSPMHQRLLTDLLFALETDVHVWRSHSTKSVMDFVNSNENIIFVHNTIHLISQMVDNIIIACGGILPLLSAATSPTGSKTELENIEVTQGMSAETAVTFLSRLMAMVDVLVFASSLNFSEIEAEKNMSSGGLMRQCLRLVCCVAVRNCLECRQRQRERVNKTSLISSKAQDALQGVTASAATKTPLENVPGNLSPIKDPDRLLQDVDINRLRAVVFRDVDDSKQAQFLALAVVYFISVLMVSKYRDILEPQRETARSGSQAGRNIRQEINSPTSTETPAVFPENIKDKETPTPVEDIQLESSIPHTDSGIGEEQMPNILNGTDLETSTGPDAMSELLSTLSSEVKKSQESLTESPSEILK</sequence>
<protein>
    <recommendedName>
        <fullName>Neurobeachin</fullName>
    </recommendedName>
</protein>
<proteinExistence type="evidence at transcript level"/>
<keyword id="KW-0963">Cytoplasm</keyword>
<keyword id="KW-0472">Membrane</keyword>
<keyword id="KW-1185">Reference proteome</keyword>
<accession>Q9DDD5</accession>
<comment type="function">
    <text evidence="2">Binds to type II regulatory subunits of protein kinase A and anchors/targets them to the membrane. May anchor the kinase to cytoskeletal and/or organelle-associated proteins (By similarity).</text>
</comment>
<comment type="subunit">
    <text evidence="2">Interacts with RII subunit of PKA.</text>
</comment>
<comment type="subcellular location">
    <subcellularLocation>
        <location evidence="1">Cytoplasm</location>
    </subcellularLocation>
    <subcellularLocation>
        <location evidence="1">Membrane</location>
        <topology evidence="1">Peripheral membrane protein</topology>
    </subcellularLocation>
</comment>
<comment type="tissue specificity">
    <text evidence="4">Forebrain and cerebellum.</text>
</comment>
<comment type="similarity">
    <text evidence="5">Belongs to the WD repeat neurobeachin family.</text>
</comment>
<reference evidence="5" key="1">
    <citation type="journal article" date="2000" name="J. Neurosci.">
        <title>Neurobeachin: a protein kinase A-anchoring, beige/Chediak-Higashi protein homolog implicated in neuronal membrane traffic.</title>
        <authorList>
            <person name="Wang X."/>
            <person name="Herberg F.W."/>
            <person name="Laue M.M."/>
            <person name="Wullner C."/>
            <person name="Hu B."/>
            <person name="Petrasch-Parwez E."/>
            <person name="Kilimann M.W."/>
        </authorList>
    </citation>
    <scope>NUCLEOTIDE SEQUENCE [MRNA]</scope>
    <scope>TISSUE SPECIFICITY</scope>
    <source>
        <tissue evidence="6">Brain</tissue>
    </source>
</reference>
<organism evidence="6">
    <name type="scientific">Gallus gallus</name>
    <name type="common">Chicken</name>
    <dbReference type="NCBI Taxonomy" id="9031"/>
    <lineage>
        <taxon>Eukaryota</taxon>
        <taxon>Metazoa</taxon>
        <taxon>Chordata</taxon>
        <taxon>Craniata</taxon>
        <taxon>Vertebrata</taxon>
        <taxon>Euteleostomi</taxon>
        <taxon>Archelosauria</taxon>
        <taxon>Archosauria</taxon>
        <taxon>Dinosauria</taxon>
        <taxon>Saurischia</taxon>
        <taxon>Theropoda</taxon>
        <taxon>Coelurosauria</taxon>
        <taxon>Aves</taxon>
        <taxon>Neognathae</taxon>
        <taxon>Galloanserae</taxon>
        <taxon>Galliformes</taxon>
        <taxon>Phasianidae</taxon>
        <taxon>Phasianinae</taxon>
        <taxon>Gallus</taxon>
    </lineage>
</organism>
<gene>
    <name type="primary">NBEA</name>
</gene>
<feature type="chain" id="PRO_0000051091" description="Neurobeachin">
    <location>
        <begin position="1" status="less than"/>
        <end position="793" status="greater than"/>
    </location>
</feature>
<feature type="region of interest" description="Disordered" evidence="3">
    <location>
        <begin position="68"/>
        <end position="92"/>
    </location>
</feature>
<feature type="region of interest" description="Disordered" evidence="3">
    <location>
        <begin position="685"/>
        <end position="793"/>
    </location>
</feature>
<feature type="compositionally biased region" description="Polar residues" evidence="3">
    <location>
        <begin position="77"/>
        <end position="90"/>
    </location>
</feature>
<feature type="compositionally biased region" description="Polar residues" evidence="3">
    <location>
        <begin position="689"/>
        <end position="710"/>
    </location>
</feature>
<feature type="compositionally biased region" description="Polar residues" evidence="3">
    <location>
        <begin position="750"/>
        <end position="762"/>
    </location>
</feature>
<feature type="compositionally biased region" description="Polar residues" evidence="3">
    <location>
        <begin position="782"/>
        <end position="793"/>
    </location>
</feature>
<feature type="non-terminal residue" evidence="6">
    <location>
        <position position="1"/>
    </location>
</feature>
<feature type="non-terminal residue" evidence="6">
    <location>
        <position position="793"/>
    </location>
</feature>